<keyword id="KW-0963">Cytoplasm</keyword>
<keyword id="KW-0690">Ribosome biogenesis</keyword>
<proteinExistence type="inferred from homology"/>
<comment type="function">
    <text evidence="1">Required for maturation of 30S ribosomal subunits.</text>
</comment>
<comment type="subcellular location">
    <subcellularLocation>
        <location evidence="1">Cytoplasm</location>
    </subcellularLocation>
</comment>
<comment type="similarity">
    <text evidence="1">Belongs to the RimP family.</text>
</comment>
<evidence type="ECO:0000255" key="1">
    <source>
        <dbReference type="HAMAP-Rule" id="MF_01077"/>
    </source>
</evidence>
<reference key="1">
    <citation type="journal article" date="2006" name="J. Bacteriol.">
        <title>Pathogenomic sequence analysis of Bacillus cereus and Bacillus thuringiensis isolates closely related to Bacillus anthracis.</title>
        <authorList>
            <person name="Han C.S."/>
            <person name="Xie G."/>
            <person name="Challacombe J.F."/>
            <person name="Altherr M.R."/>
            <person name="Bhotika S.S."/>
            <person name="Bruce D."/>
            <person name="Campbell C.S."/>
            <person name="Campbell M.L."/>
            <person name="Chen J."/>
            <person name="Chertkov O."/>
            <person name="Cleland C."/>
            <person name="Dimitrijevic M."/>
            <person name="Doggett N.A."/>
            <person name="Fawcett J.J."/>
            <person name="Glavina T."/>
            <person name="Goodwin L.A."/>
            <person name="Hill K.K."/>
            <person name="Hitchcock P."/>
            <person name="Jackson P.J."/>
            <person name="Keim P."/>
            <person name="Kewalramani A.R."/>
            <person name="Longmire J."/>
            <person name="Lucas S."/>
            <person name="Malfatti S."/>
            <person name="McMurry K."/>
            <person name="Meincke L.J."/>
            <person name="Misra M."/>
            <person name="Moseman B.L."/>
            <person name="Mundt M."/>
            <person name="Munk A.C."/>
            <person name="Okinaka R.T."/>
            <person name="Parson-Quintana B."/>
            <person name="Reilly L.P."/>
            <person name="Richardson P."/>
            <person name="Robinson D.L."/>
            <person name="Rubin E."/>
            <person name="Saunders E."/>
            <person name="Tapia R."/>
            <person name="Tesmer J.G."/>
            <person name="Thayer N."/>
            <person name="Thompson L.S."/>
            <person name="Tice H."/>
            <person name="Ticknor L.O."/>
            <person name="Wills P.L."/>
            <person name="Brettin T.S."/>
            <person name="Gilna P."/>
        </authorList>
    </citation>
    <scope>NUCLEOTIDE SEQUENCE [LARGE SCALE GENOMIC DNA]</scope>
    <source>
        <strain>ZK / E33L</strain>
    </source>
</reference>
<accession>Q636K9</accession>
<dbReference type="EMBL" id="CP000001">
    <property type="protein sequence ID" value="AAU16690.1"/>
    <property type="molecule type" value="Genomic_DNA"/>
</dbReference>
<dbReference type="RefSeq" id="WP_000359097.1">
    <property type="nucleotide sequence ID" value="NZ_CP009968.1"/>
</dbReference>
<dbReference type="SMR" id="Q636K9"/>
<dbReference type="GeneID" id="93007295"/>
<dbReference type="KEGG" id="bcz:BCE33L3576"/>
<dbReference type="PATRIC" id="fig|288681.22.peg.1835"/>
<dbReference type="Proteomes" id="UP000002612">
    <property type="component" value="Chromosome"/>
</dbReference>
<dbReference type="GO" id="GO:0005829">
    <property type="term" value="C:cytosol"/>
    <property type="evidence" value="ECO:0007669"/>
    <property type="project" value="TreeGrafter"/>
</dbReference>
<dbReference type="GO" id="GO:0000028">
    <property type="term" value="P:ribosomal small subunit assembly"/>
    <property type="evidence" value="ECO:0007669"/>
    <property type="project" value="TreeGrafter"/>
</dbReference>
<dbReference type="GO" id="GO:0006412">
    <property type="term" value="P:translation"/>
    <property type="evidence" value="ECO:0007669"/>
    <property type="project" value="TreeGrafter"/>
</dbReference>
<dbReference type="CDD" id="cd01734">
    <property type="entry name" value="YlxS_C"/>
    <property type="match status" value="1"/>
</dbReference>
<dbReference type="FunFam" id="2.30.30.180:FF:000002">
    <property type="entry name" value="Ribosome maturation factor RimP"/>
    <property type="match status" value="1"/>
</dbReference>
<dbReference type="FunFam" id="3.30.300.70:FF:000001">
    <property type="entry name" value="Ribosome maturation factor RimP"/>
    <property type="match status" value="1"/>
</dbReference>
<dbReference type="Gene3D" id="2.30.30.180">
    <property type="entry name" value="Ribosome maturation factor RimP, C-terminal domain"/>
    <property type="match status" value="1"/>
</dbReference>
<dbReference type="Gene3D" id="3.30.300.70">
    <property type="entry name" value="RimP-like superfamily, N-terminal"/>
    <property type="match status" value="1"/>
</dbReference>
<dbReference type="HAMAP" id="MF_01077">
    <property type="entry name" value="RimP"/>
    <property type="match status" value="1"/>
</dbReference>
<dbReference type="InterPro" id="IPR003728">
    <property type="entry name" value="Ribosome_maturation_RimP"/>
</dbReference>
<dbReference type="InterPro" id="IPR028998">
    <property type="entry name" value="RimP_C"/>
</dbReference>
<dbReference type="InterPro" id="IPR036847">
    <property type="entry name" value="RimP_C_sf"/>
</dbReference>
<dbReference type="InterPro" id="IPR028989">
    <property type="entry name" value="RimP_N"/>
</dbReference>
<dbReference type="InterPro" id="IPR035956">
    <property type="entry name" value="RimP_N_sf"/>
</dbReference>
<dbReference type="NCBIfam" id="NF000928">
    <property type="entry name" value="PRK00092.1-2"/>
    <property type="match status" value="1"/>
</dbReference>
<dbReference type="PANTHER" id="PTHR33867">
    <property type="entry name" value="RIBOSOME MATURATION FACTOR RIMP"/>
    <property type="match status" value="1"/>
</dbReference>
<dbReference type="PANTHER" id="PTHR33867:SF1">
    <property type="entry name" value="RIBOSOME MATURATION FACTOR RIMP"/>
    <property type="match status" value="1"/>
</dbReference>
<dbReference type="Pfam" id="PF17384">
    <property type="entry name" value="DUF150_C"/>
    <property type="match status" value="1"/>
</dbReference>
<dbReference type="Pfam" id="PF02576">
    <property type="entry name" value="RimP_N"/>
    <property type="match status" value="1"/>
</dbReference>
<dbReference type="SUPFAM" id="SSF74942">
    <property type="entry name" value="YhbC-like, C-terminal domain"/>
    <property type="match status" value="1"/>
</dbReference>
<dbReference type="SUPFAM" id="SSF75420">
    <property type="entry name" value="YhbC-like, N-terminal domain"/>
    <property type="match status" value="1"/>
</dbReference>
<organism>
    <name type="scientific">Bacillus cereus (strain ZK / E33L)</name>
    <dbReference type="NCBI Taxonomy" id="288681"/>
    <lineage>
        <taxon>Bacteria</taxon>
        <taxon>Bacillati</taxon>
        <taxon>Bacillota</taxon>
        <taxon>Bacilli</taxon>
        <taxon>Bacillales</taxon>
        <taxon>Bacillaceae</taxon>
        <taxon>Bacillus</taxon>
        <taxon>Bacillus cereus group</taxon>
    </lineage>
</organism>
<name>RIMP_BACCZ</name>
<gene>
    <name evidence="1" type="primary">rimP</name>
    <name type="ordered locus">BCE33L3576</name>
</gene>
<protein>
    <recommendedName>
        <fullName evidence="1">Ribosome maturation factor RimP</fullName>
    </recommendedName>
</protein>
<feature type="chain" id="PRO_0000229216" description="Ribosome maturation factor RimP">
    <location>
        <begin position="1"/>
        <end position="156"/>
    </location>
</feature>
<sequence length="156" mass="17696">MDKKVTEVVEAFAQPIVEELNLELVDVEYVKEGQDWFLRVFIDSEKGVDIEECGAVSERLSEALDKEDPIPHLYFLDVSSPGAERPLKKEKDFQQAVGKQVAIKTYEPIDGEKMFEGKMLSYDGTTITLLLTIKTRKKEIQIPMDKVANARLAVTF</sequence>